<keyword id="KW-1185">Reference proteome</keyword>
<reference key="1">
    <citation type="journal article" date="2002" name="J. Bacteriol.">
        <title>Whole-genome comparison of Mycobacterium tuberculosis clinical and laboratory strains.</title>
        <authorList>
            <person name="Fleischmann R.D."/>
            <person name="Alland D."/>
            <person name="Eisen J.A."/>
            <person name="Carpenter L."/>
            <person name="White O."/>
            <person name="Peterson J.D."/>
            <person name="DeBoy R.T."/>
            <person name="Dodson R.J."/>
            <person name="Gwinn M.L."/>
            <person name="Haft D.H."/>
            <person name="Hickey E.K."/>
            <person name="Kolonay J.F."/>
            <person name="Nelson W.C."/>
            <person name="Umayam L.A."/>
            <person name="Ermolaeva M.D."/>
            <person name="Salzberg S.L."/>
            <person name="Delcher A."/>
            <person name="Utterback T.R."/>
            <person name="Weidman J.F."/>
            <person name="Khouri H.M."/>
            <person name="Gill J."/>
            <person name="Mikula A."/>
            <person name="Bishai W."/>
            <person name="Jacobs W.R. Jr."/>
            <person name="Venter J.C."/>
            <person name="Fraser C.M."/>
        </authorList>
    </citation>
    <scope>NUCLEOTIDE SEQUENCE [LARGE SCALE GENOMIC DNA]</scope>
    <source>
        <strain>CDC 1551 / Oshkosh</strain>
    </source>
</reference>
<dbReference type="EMBL" id="AE000516">
    <property type="protein sequence ID" value="AAK47292.1"/>
    <property type="status" value="ALT_INIT"/>
    <property type="molecule type" value="Genomic_DNA"/>
</dbReference>
<dbReference type="PIR" id="E70926">
    <property type="entry name" value="E70926"/>
</dbReference>
<dbReference type="RefSeq" id="WP_003414702.1">
    <property type="nucleotide sequence ID" value="NZ_KK341227.1"/>
</dbReference>
<dbReference type="SMR" id="P9WFM8"/>
<dbReference type="KEGG" id="mtc:MT2966"/>
<dbReference type="PATRIC" id="fig|83331.31.peg.3206"/>
<dbReference type="HOGENOM" id="CLU_115353_2_3_11"/>
<dbReference type="Proteomes" id="UP000001020">
    <property type="component" value="Chromosome"/>
</dbReference>
<dbReference type="GO" id="GO:0003676">
    <property type="term" value="F:nucleic acid binding"/>
    <property type="evidence" value="ECO:0007669"/>
    <property type="project" value="InterPro"/>
</dbReference>
<dbReference type="CDD" id="cd20736">
    <property type="entry name" value="PoNe_Nuclease"/>
    <property type="match status" value="1"/>
</dbReference>
<dbReference type="Gene3D" id="3.40.1350.10">
    <property type="match status" value="1"/>
</dbReference>
<dbReference type="HAMAP" id="MF_00048">
    <property type="entry name" value="UPF0102"/>
    <property type="match status" value="1"/>
</dbReference>
<dbReference type="InterPro" id="IPR011335">
    <property type="entry name" value="Restrct_endonuc-II-like"/>
</dbReference>
<dbReference type="InterPro" id="IPR011856">
    <property type="entry name" value="tRNA_endonuc-like_dom_sf"/>
</dbReference>
<dbReference type="InterPro" id="IPR003509">
    <property type="entry name" value="UPF0102_YraN-like"/>
</dbReference>
<dbReference type="NCBIfam" id="NF009150">
    <property type="entry name" value="PRK12497.1-3"/>
    <property type="match status" value="1"/>
</dbReference>
<dbReference type="NCBIfam" id="NF009153">
    <property type="entry name" value="PRK12497.3-1"/>
    <property type="match status" value="1"/>
</dbReference>
<dbReference type="NCBIfam" id="NF009154">
    <property type="entry name" value="PRK12497.3-3"/>
    <property type="match status" value="1"/>
</dbReference>
<dbReference type="NCBIfam" id="TIGR00252">
    <property type="entry name" value="YraN family protein"/>
    <property type="match status" value="1"/>
</dbReference>
<dbReference type="PANTHER" id="PTHR34039">
    <property type="entry name" value="UPF0102 PROTEIN YRAN"/>
    <property type="match status" value="1"/>
</dbReference>
<dbReference type="PANTHER" id="PTHR34039:SF1">
    <property type="entry name" value="UPF0102 PROTEIN YRAN"/>
    <property type="match status" value="1"/>
</dbReference>
<dbReference type="Pfam" id="PF02021">
    <property type="entry name" value="UPF0102"/>
    <property type="match status" value="1"/>
</dbReference>
<dbReference type="SUPFAM" id="SSF52980">
    <property type="entry name" value="Restriction endonuclease-like"/>
    <property type="match status" value="1"/>
</dbReference>
<protein>
    <recommendedName>
        <fullName>UPF0102 protein MT2966</fullName>
    </recommendedName>
</protein>
<name>Y2898_MYCTO</name>
<proteinExistence type="inferred from homology"/>
<comment type="similarity">
    <text evidence="1">Belongs to the UPF0102 family.</text>
</comment>
<comment type="sequence caution" evidence="1">
    <conflict type="erroneous initiation">
        <sequence resource="EMBL-CDS" id="AAK47292"/>
    </conflict>
</comment>
<organism>
    <name type="scientific">Mycobacterium tuberculosis (strain CDC 1551 / Oshkosh)</name>
    <dbReference type="NCBI Taxonomy" id="83331"/>
    <lineage>
        <taxon>Bacteria</taxon>
        <taxon>Bacillati</taxon>
        <taxon>Actinomycetota</taxon>
        <taxon>Actinomycetes</taxon>
        <taxon>Mycobacteriales</taxon>
        <taxon>Mycobacteriaceae</taxon>
        <taxon>Mycobacterium</taxon>
        <taxon>Mycobacterium tuberculosis complex</taxon>
    </lineage>
</organism>
<sequence>MTTLKTMTRVQLGAMGEALAVDYLTSMGLRILNRNWRCRYGELDVIACDAATRTVVFVEVKTRTGDGYGGLAHAVTERKVRRLRRLAGLWLADQEERWAAVRIDVIGVRVGPKNSGRTPELTHLQGIG</sequence>
<evidence type="ECO:0000305" key="1"/>
<accession>P9WFM8</accession>
<accession>L0TAZ0</accession>
<accession>P67230</accession>
<accession>Q10819</accession>
<gene>
    <name type="ordered locus">MT2966</name>
</gene>
<feature type="chain" id="PRO_0000428511" description="UPF0102 protein MT2966">
    <location>
        <begin position="1"/>
        <end position="128"/>
    </location>
</feature>